<proteinExistence type="inferred from homology"/>
<evidence type="ECO:0000255" key="1">
    <source>
        <dbReference type="HAMAP-Rule" id="MF_01006"/>
    </source>
</evidence>
<gene>
    <name evidence="1" type="primary">uppP</name>
    <name type="ordered locus">ESA_00361</name>
</gene>
<sequence length="272" mass="29458">MTDMHSLLVAAILGIVEGLTEFLPVSSTGHMIIVGHLLGFEGDTAKTFEVVIQLGSILAVVVMFWRRLFGLIGIHFGHPPHEGVGKGRLSLIHILLGMVPAVVLGLVFHDFIKSLFNPINVMYALVVGGVLLIIAEVLKPKEPKAPGLDDMTYRQAFFIGCFQCLALWPGFSRSGATISGGMLVGVSRYAASEFSFLLAVPMMMGATALDLYKSMGFLTMADLPMFAVGFVTAFVVALVAIKTFLHIIKRISFIPFAIYRFIVAAAVFAVFM</sequence>
<name>UPPP_CROS8</name>
<organism>
    <name type="scientific">Cronobacter sakazakii (strain ATCC BAA-894)</name>
    <name type="common">Enterobacter sakazakii</name>
    <dbReference type="NCBI Taxonomy" id="290339"/>
    <lineage>
        <taxon>Bacteria</taxon>
        <taxon>Pseudomonadati</taxon>
        <taxon>Pseudomonadota</taxon>
        <taxon>Gammaproteobacteria</taxon>
        <taxon>Enterobacterales</taxon>
        <taxon>Enterobacteriaceae</taxon>
        <taxon>Cronobacter</taxon>
    </lineage>
</organism>
<accession>A7MJT8</accession>
<feature type="chain" id="PRO_1000062799" description="Undecaprenyl-diphosphatase">
    <location>
        <begin position="1"/>
        <end position="272"/>
    </location>
</feature>
<feature type="transmembrane region" description="Helical" evidence="1">
    <location>
        <begin position="6"/>
        <end position="26"/>
    </location>
</feature>
<feature type="transmembrane region" description="Helical" evidence="1">
    <location>
        <begin position="45"/>
        <end position="65"/>
    </location>
</feature>
<feature type="transmembrane region" description="Helical" evidence="1">
    <location>
        <begin position="89"/>
        <end position="109"/>
    </location>
</feature>
<feature type="transmembrane region" description="Helical" evidence="1">
    <location>
        <begin position="115"/>
        <end position="135"/>
    </location>
</feature>
<feature type="transmembrane region" description="Helical" evidence="1">
    <location>
        <begin position="156"/>
        <end position="176"/>
    </location>
</feature>
<feature type="transmembrane region" description="Helical" evidence="1">
    <location>
        <begin position="189"/>
        <end position="209"/>
    </location>
</feature>
<feature type="transmembrane region" description="Helical" evidence="1">
    <location>
        <begin position="221"/>
        <end position="241"/>
    </location>
</feature>
<feature type="transmembrane region" description="Helical" evidence="1">
    <location>
        <begin position="251"/>
        <end position="271"/>
    </location>
</feature>
<protein>
    <recommendedName>
        <fullName evidence="1">Undecaprenyl-diphosphatase</fullName>
        <ecNumber evidence="1">3.6.1.27</ecNumber>
    </recommendedName>
    <alternativeName>
        <fullName evidence="1">Bacitracin resistance protein</fullName>
    </alternativeName>
    <alternativeName>
        <fullName evidence="1">Undecaprenyl pyrophosphate phosphatase</fullName>
    </alternativeName>
</protein>
<reference key="1">
    <citation type="journal article" date="2010" name="PLoS ONE">
        <title>Genome sequence of Cronobacter sakazakii BAA-894 and comparative genomic hybridization analysis with other Cronobacter species.</title>
        <authorList>
            <person name="Kucerova E."/>
            <person name="Clifton S.W."/>
            <person name="Xia X.Q."/>
            <person name="Long F."/>
            <person name="Porwollik S."/>
            <person name="Fulton L."/>
            <person name="Fronick C."/>
            <person name="Minx P."/>
            <person name="Kyung K."/>
            <person name="Warren W."/>
            <person name="Fulton R."/>
            <person name="Feng D."/>
            <person name="Wollam A."/>
            <person name="Shah N."/>
            <person name="Bhonagiri V."/>
            <person name="Nash W.E."/>
            <person name="Hallsworth-Pepin K."/>
            <person name="Wilson R.K."/>
            <person name="McClelland M."/>
            <person name="Forsythe S.J."/>
        </authorList>
    </citation>
    <scope>NUCLEOTIDE SEQUENCE [LARGE SCALE GENOMIC DNA]</scope>
    <source>
        <strain>ATCC BAA-894</strain>
    </source>
</reference>
<comment type="function">
    <text evidence="1">Catalyzes the dephosphorylation of undecaprenyl diphosphate (UPP). Confers resistance to bacitracin.</text>
</comment>
<comment type="catalytic activity">
    <reaction evidence="1">
        <text>di-trans,octa-cis-undecaprenyl diphosphate + H2O = di-trans,octa-cis-undecaprenyl phosphate + phosphate + H(+)</text>
        <dbReference type="Rhea" id="RHEA:28094"/>
        <dbReference type="ChEBI" id="CHEBI:15377"/>
        <dbReference type="ChEBI" id="CHEBI:15378"/>
        <dbReference type="ChEBI" id="CHEBI:43474"/>
        <dbReference type="ChEBI" id="CHEBI:58405"/>
        <dbReference type="ChEBI" id="CHEBI:60392"/>
        <dbReference type="EC" id="3.6.1.27"/>
    </reaction>
</comment>
<comment type="subcellular location">
    <subcellularLocation>
        <location evidence="1">Cell inner membrane</location>
        <topology evidence="1">Multi-pass membrane protein</topology>
    </subcellularLocation>
</comment>
<comment type="miscellaneous">
    <text>Bacitracin is thought to be involved in the inhibition of peptidoglycan synthesis by sequestering undecaprenyl diphosphate, thereby reducing the pool of lipid carrier available.</text>
</comment>
<comment type="similarity">
    <text evidence="1">Belongs to the UppP family.</text>
</comment>
<keyword id="KW-0046">Antibiotic resistance</keyword>
<keyword id="KW-0997">Cell inner membrane</keyword>
<keyword id="KW-1003">Cell membrane</keyword>
<keyword id="KW-0133">Cell shape</keyword>
<keyword id="KW-0961">Cell wall biogenesis/degradation</keyword>
<keyword id="KW-0378">Hydrolase</keyword>
<keyword id="KW-0472">Membrane</keyword>
<keyword id="KW-0573">Peptidoglycan synthesis</keyword>
<keyword id="KW-1185">Reference proteome</keyword>
<keyword id="KW-0812">Transmembrane</keyword>
<keyword id="KW-1133">Transmembrane helix</keyword>
<dbReference type="EC" id="3.6.1.27" evidence="1"/>
<dbReference type="EMBL" id="CP000783">
    <property type="protein sequence ID" value="ABU75659.1"/>
    <property type="molecule type" value="Genomic_DNA"/>
</dbReference>
<dbReference type="SMR" id="A7MJT8"/>
<dbReference type="KEGG" id="esa:ESA_00361"/>
<dbReference type="HOGENOM" id="CLU_060296_2_0_6"/>
<dbReference type="Proteomes" id="UP000000260">
    <property type="component" value="Chromosome"/>
</dbReference>
<dbReference type="GO" id="GO:0005886">
    <property type="term" value="C:plasma membrane"/>
    <property type="evidence" value="ECO:0007669"/>
    <property type="project" value="UniProtKB-SubCell"/>
</dbReference>
<dbReference type="GO" id="GO:0050380">
    <property type="term" value="F:undecaprenyl-diphosphatase activity"/>
    <property type="evidence" value="ECO:0007669"/>
    <property type="project" value="UniProtKB-UniRule"/>
</dbReference>
<dbReference type="GO" id="GO:0071555">
    <property type="term" value="P:cell wall organization"/>
    <property type="evidence" value="ECO:0007669"/>
    <property type="project" value="UniProtKB-KW"/>
</dbReference>
<dbReference type="GO" id="GO:0009252">
    <property type="term" value="P:peptidoglycan biosynthetic process"/>
    <property type="evidence" value="ECO:0007669"/>
    <property type="project" value="UniProtKB-KW"/>
</dbReference>
<dbReference type="GO" id="GO:0008360">
    <property type="term" value="P:regulation of cell shape"/>
    <property type="evidence" value="ECO:0007669"/>
    <property type="project" value="UniProtKB-KW"/>
</dbReference>
<dbReference type="GO" id="GO:0046677">
    <property type="term" value="P:response to antibiotic"/>
    <property type="evidence" value="ECO:0007669"/>
    <property type="project" value="UniProtKB-UniRule"/>
</dbReference>
<dbReference type="HAMAP" id="MF_01006">
    <property type="entry name" value="Undec_diphosphatase"/>
    <property type="match status" value="1"/>
</dbReference>
<dbReference type="InterPro" id="IPR003824">
    <property type="entry name" value="UppP"/>
</dbReference>
<dbReference type="NCBIfam" id="NF001388">
    <property type="entry name" value="PRK00281.1-1"/>
    <property type="match status" value="1"/>
</dbReference>
<dbReference type="NCBIfam" id="NF001389">
    <property type="entry name" value="PRK00281.1-2"/>
    <property type="match status" value="1"/>
</dbReference>
<dbReference type="NCBIfam" id="NF001390">
    <property type="entry name" value="PRK00281.1-4"/>
    <property type="match status" value="1"/>
</dbReference>
<dbReference type="NCBIfam" id="TIGR00753">
    <property type="entry name" value="undec_PP_bacA"/>
    <property type="match status" value="1"/>
</dbReference>
<dbReference type="PANTHER" id="PTHR30622">
    <property type="entry name" value="UNDECAPRENYL-DIPHOSPHATASE"/>
    <property type="match status" value="1"/>
</dbReference>
<dbReference type="PANTHER" id="PTHR30622:SF3">
    <property type="entry name" value="UNDECAPRENYL-DIPHOSPHATASE"/>
    <property type="match status" value="1"/>
</dbReference>
<dbReference type="Pfam" id="PF02673">
    <property type="entry name" value="BacA"/>
    <property type="match status" value="1"/>
</dbReference>